<accession>P48365</accession>
<accession>D6VRC2</accession>
<feature type="chain" id="PRO_0000208017" description="GTPase-activating protein GYP7">
    <location>
        <begin position="1"/>
        <end position="746"/>
    </location>
</feature>
<feature type="domain" description="Rab-GAP TBC" evidence="1">
    <location>
        <begin position="385"/>
        <end position="633"/>
    </location>
</feature>
<feature type="region of interest" description="Disordered" evidence="2">
    <location>
        <begin position="470"/>
        <end position="505"/>
    </location>
</feature>
<feature type="compositionally biased region" description="Polar residues" evidence="2">
    <location>
        <begin position="481"/>
        <end position="491"/>
    </location>
</feature>
<feature type="site" description="Arginine finger" evidence="8">
    <location>
        <position position="458"/>
    </location>
</feature>
<feature type="modified residue" description="Phosphoserine" evidence="9">
    <location>
        <position position="265"/>
    </location>
</feature>
<feature type="modified residue" description="Phosphoserine" evidence="9">
    <location>
        <position position="339"/>
    </location>
</feature>
<feature type="mutagenesis site" description="Completely abolishes catalytic activity." evidence="4">
    <original>R</original>
    <variation>A</variation>
    <variation>K</variation>
    <location>
        <position position="458"/>
    </location>
</feature>
<name>GYP7_YEAST</name>
<proteinExistence type="evidence at protein level"/>
<organism>
    <name type="scientific">Saccharomyces cerevisiae (strain ATCC 204508 / S288c)</name>
    <name type="common">Baker's yeast</name>
    <dbReference type="NCBI Taxonomy" id="559292"/>
    <lineage>
        <taxon>Eukaryota</taxon>
        <taxon>Fungi</taxon>
        <taxon>Dikarya</taxon>
        <taxon>Ascomycota</taxon>
        <taxon>Saccharomycotina</taxon>
        <taxon>Saccharomycetes</taxon>
        <taxon>Saccharomycetales</taxon>
        <taxon>Saccharomycetaceae</taxon>
        <taxon>Saccharomyces</taxon>
    </lineage>
</organism>
<reference key="1">
    <citation type="journal article" date="1999" name="Eur. J. Biochem.">
        <title>Primary structure and biochemical characterization of yeast GTPase-activating proteins with substrate preference for the transport GTPase Ypt7p.</title>
        <authorList>
            <person name="Vollmer P."/>
            <person name="Will E."/>
            <person name="Scheglmann D."/>
            <person name="Strom M."/>
            <person name="Gallwitz D."/>
        </authorList>
    </citation>
    <scope>NUCLEOTIDE SEQUENCE [GENOMIC DNA]</scope>
    <scope>FUNCTION</scope>
    <source>
        <strain>AG430</strain>
    </source>
</reference>
<reference key="2">
    <citation type="journal article" date="1997" name="Nature">
        <title>The nucleotide sequence of Saccharomyces cerevisiae chromosome IV.</title>
        <authorList>
            <person name="Jacq C."/>
            <person name="Alt-Moerbe J."/>
            <person name="Andre B."/>
            <person name="Arnold W."/>
            <person name="Bahr A."/>
            <person name="Ballesta J.P.G."/>
            <person name="Bargues M."/>
            <person name="Baron L."/>
            <person name="Becker A."/>
            <person name="Biteau N."/>
            <person name="Bloecker H."/>
            <person name="Blugeon C."/>
            <person name="Boskovic J."/>
            <person name="Brandt P."/>
            <person name="Brueckner M."/>
            <person name="Buitrago M.J."/>
            <person name="Coster F."/>
            <person name="Delaveau T."/>
            <person name="del Rey F."/>
            <person name="Dujon B."/>
            <person name="Eide L.G."/>
            <person name="Garcia-Cantalejo J.M."/>
            <person name="Goffeau A."/>
            <person name="Gomez-Peris A."/>
            <person name="Granotier C."/>
            <person name="Hanemann V."/>
            <person name="Hankeln T."/>
            <person name="Hoheisel J.D."/>
            <person name="Jaeger W."/>
            <person name="Jimenez A."/>
            <person name="Jonniaux J.-L."/>
            <person name="Kraemer C."/>
            <person name="Kuester H."/>
            <person name="Laamanen P."/>
            <person name="Legros Y."/>
            <person name="Louis E.J."/>
            <person name="Moeller-Rieker S."/>
            <person name="Monnet A."/>
            <person name="Moro M."/>
            <person name="Mueller-Auer S."/>
            <person name="Nussbaumer B."/>
            <person name="Paricio N."/>
            <person name="Paulin L."/>
            <person name="Perea J."/>
            <person name="Perez-Alonso M."/>
            <person name="Perez-Ortin J.E."/>
            <person name="Pohl T.M."/>
            <person name="Prydz H."/>
            <person name="Purnelle B."/>
            <person name="Rasmussen S.W."/>
            <person name="Remacha M.A."/>
            <person name="Revuelta J.L."/>
            <person name="Rieger M."/>
            <person name="Salom D."/>
            <person name="Saluz H.P."/>
            <person name="Saiz J.E."/>
            <person name="Saren A.-M."/>
            <person name="Schaefer M."/>
            <person name="Scharfe M."/>
            <person name="Schmidt E.R."/>
            <person name="Schneider C."/>
            <person name="Scholler P."/>
            <person name="Schwarz S."/>
            <person name="Soler-Mira A."/>
            <person name="Urrestarazu L.A."/>
            <person name="Verhasselt P."/>
            <person name="Vissers S."/>
            <person name="Voet M."/>
            <person name="Volckaert G."/>
            <person name="Wagner G."/>
            <person name="Wambutt R."/>
            <person name="Wedler E."/>
            <person name="Wedler H."/>
            <person name="Woelfl S."/>
            <person name="Harris D.E."/>
            <person name="Bowman S."/>
            <person name="Brown D."/>
            <person name="Churcher C.M."/>
            <person name="Connor R."/>
            <person name="Dedman K."/>
            <person name="Gentles S."/>
            <person name="Hamlin N."/>
            <person name="Hunt S."/>
            <person name="Jones L."/>
            <person name="McDonald S."/>
            <person name="Murphy L.D."/>
            <person name="Niblett D."/>
            <person name="Odell C."/>
            <person name="Oliver K."/>
            <person name="Rajandream M.A."/>
            <person name="Richards C."/>
            <person name="Shore L."/>
            <person name="Walsh S.V."/>
            <person name="Barrell B.G."/>
            <person name="Dietrich F.S."/>
            <person name="Mulligan J.T."/>
            <person name="Allen E."/>
            <person name="Araujo R."/>
            <person name="Aviles E."/>
            <person name="Berno A."/>
            <person name="Carpenter J."/>
            <person name="Chen E."/>
            <person name="Cherry J.M."/>
            <person name="Chung E."/>
            <person name="Duncan M."/>
            <person name="Hunicke-Smith S."/>
            <person name="Hyman R.W."/>
            <person name="Komp C."/>
            <person name="Lashkari D."/>
            <person name="Lew H."/>
            <person name="Lin D."/>
            <person name="Mosedale D."/>
            <person name="Nakahara K."/>
            <person name="Namath A."/>
            <person name="Oefner P."/>
            <person name="Oh C."/>
            <person name="Petel F.X."/>
            <person name="Roberts D."/>
            <person name="Schramm S."/>
            <person name="Schroeder M."/>
            <person name="Shogren T."/>
            <person name="Shroff N."/>
            <person name="Winant A."/>
            <person name="Yelton M.A."/>
            <person name="Botstein D."/>
            <person name="Davis R.W."/>
            <person name="Johnston M."/>
            <person name="Andrews S."/>
            <person name="Brinkman R."/>
            <person name="Cooper J."/>
            <person name="Ding H."/>
            <person name="Du Z."/>
            <person name="Favello A."/>
            <person name="Fulton L."/>
            <person name="Gattung S."/>
            <person name="Greco T."/>
            <person name="Hallsworth K."/>
            <person name="Hawkins J."/>
            <person name="Hillier L.W."/>
            <person name="Jier M."/>
            <person name="Johnson D."/>
            <person name="Johnston L."/>
            <person name="Kirsten J."/>
            <person name="Kucaba T."/>
            <person name="Langston Y."/>
            <person name="Latreille P."/>
            <person name="Le T."/>
            <person name="Mardis E."/>
            <person name="Menezes S."/>
            <person name="Miller N."/>
            <person name="Nhan M."/>
            <person name="Pauley A."/>
            <person name="Peluso D."/>
            <person name="Rifkin L."/>
            <person name="Riles L."/>
            <person name="Taich A."/>
            <person name="Trevaskis E."/>
            <person name="Vignati D."/>
            <person name="Wilcox L."/>
            <person name="Wohldman P."/>
            <person name="Vaudin M."/>
            <person name="Wilson R."/>
            <person name="Waterston R."/>
            <person name="Albermann K."/>
            <person name="Hani J."/>
            <person name="Heumann K."/>
            <person name="Kleine K."/>
            <person name="Mewes H.-W."/>
            <person name="Zollner A."/>
            <person name="Zaccaria P."/>
        </authorList>
    </citation>
    <scope>NUCLEOTIDE SEQUENCE [LARGE SCALE GENOMIC DNA]</scope>
    <source>
        <strain>ATCC 204508 / S288c</strain>
    </source>
</reference>
<reference key="3">
    <citation type="journal article" date="2014" name="G3 (Bethesda)">
        <title>The reference genome sequence of Saccharomyces cerevisiae: Then and now.</title>
        <authorList>
            <person name="Engel S.R."/>
            <person name="Dietrich F.S."/>
            <person name="Fisk D.G."/>
            <person name="Binkley G."/>
            <person name="Balakrishnan R."/>
            <person name="Costanzo M.C."/>
            <person name="Dwight S.S."/>
            <person name="Hitz B.C."/>
            <person name="Karra K."/>
            <person name="Nash R.S."/>
            <person name="Weng S."/>
            <person name="Wong E.D."/>
            <person name="Lloyd P."/>
            <person name="Skrzypek M.S."/>
            <person name="Miyasato S.R."/>
            <person name="Simison M."/>
            <person name="Cherry J.M."/>
        </authorList>
    </citation>
    <scope>GENOME REANNOTATION</scope>
    <source>
        <strain>ATCC 204508 / S288c</strain>
    </source>
</reference>
<reference key="4">
    <citation type="journal article" date="1999" name="EMBO J.">
        <title>Identification of the catalytic domains and their functionally critical arginine residues of two yeast GTPase-activating proteins specific for Ypt/Rab transport GTPases.</title>
        <authorList>
            <person name="Albert S."/>
            <person name="Will E."/>
            <person name="Gallwitz D."/>
        </authorList>
    </citation>
    <scope>FUNCTION</scope>
    <scope>MUTAGENESIS OF ARG-458</scope>
</reference>
<reference key="5">
    <citation type="journal article" date="2001" name="Methods Enzymol.">
        <title>Expression, purification, and biochemical properties of Ypt/Rab GTPase-activating proteins of Gyp family.</title>
        <authorList>
            <person name="Will E."/>
            <person name="Albert S."/>
            <person name="Gallwitz D."/>
        </authorList>
    </citation>
    <scope>FUNCTION</scope>
</reference>
<reference key="6">
    <citation type="journal article" date="2003" name="Nature">
        <title>Global analysis of protein localization in budding yeast.</title>
        <authorList>
            <person name="Huh W.-K."/>
            <person name="Falvo J.V."/>
            <person name="Gerke L.C."/>
            <person name="Carroll A.S."/>
            <person name="Howson R.W."/>
            <person name="Weissman J.S."/>
            <person name="O'Shea E.K."/>
        </authorList>
    </citation>
    <scope>SUBCELLULAR LOCATION [LARGE SCALE ANALYSIS]</scope>
</reference>
<reference key="7">
    <citation type="journal article" date="2003" name="Nature">
        <title>Global analysis of protein expression in yeast.</title>
        <authorList>
            <person name="Ghaemmaghami S."/>
            <person name="Huh W.-K."/>
            <person name="Bower K."/>
            <person name="Howson R.W."/>
            <person name="Belle A."/>
            <person name="Dephoure N."/>
            <person name="O'Shea E.K."/>
            <person name="Weissman J.S."/>
        </authorList>
    </citation>
    <scope>LEVEL OF PROTEIN EXPRESSION [LARGE SCALE ANALYSIS]</scope>
</reference>
<reference key="8">
    <citation type="journal article" date="2008" name="Mol. Cell. Proteomics">
        <title>A multidimensional chromatography technology for in-depth phosphoproteome analysis.</title>
        <authorList>
            <person name="Albuquerque C.P."/>
            <person name="Smolka M.B."/>
            <person name="Payne S.H."/>
            <person name="Bafna V."/>
            <person name="Eng J."/>
            <person name="Zhou H."/>
        </authorList>
    </citation>
    <scope>IDENTIFICATION BY MASS SPECTROMETRY [LARGE SCALE ANALYSIS]</scope>
</reference>
<reference key="9">
    <citation type="journal article" date="2009" name="Science">
        <title>Global analysis of Cdk1 substrate phosphorylation sites provides insights into evolution.</title>
        <authorList>
            <person name="Holt L.J."/>
            <person name="Tuch B.B."/>
            <person name="Villen J."/>
            <person name="Johnson A.D."/>
            <person name="Gygi S.P."/>
            <person name="Morgan D.O."/>
        </authorList>
    </citation>
    <scope>PHOSPHORYLATION [LARGE SCALE ANALYSIS] AT SER-265 AND SER-339</scope>
    <scope>IDENTIFICATION BY MASS SPECTROMETRY [LARGE SCALE ANALYSIS]</scope>
</reference>
<comment type="function">
    <text evidence="3 5 8">GTPase-activating protein (GAP) that most effectively accelerates the intrinsic GTPase activity of Ypt/Rab-type GTPase YPT7 involved in vacuole docking and fusion (PubMed:10091609, PubMed:11210571). It is also active, but to a lesser extent, on YPT31, YPT32, YPT1, YPT6 and SEC4 (PubMed:10091609, PubMed:11210571). Provides a catalytic arginine (arginine finger) in trans to accelerate the GTP hydrolysis rate of the substrate GTPase (Probable).</text>
</comment>
<comment type="interaction">
    <interactant intactId="EBI-8018">
        <id>P48365</id>
    </interactant>
    <interactant intactId="EBI-7000452">
        <id>P0CG63</id>
        <label>UBI4</label>
    </interactant>
    <organismsDiffer>false</organismsDiffer>
    <experiments>2</experiments>
</comment>
<comment type="subcellular location">
    <subcellularLocation>
        <location evidence="6">Cytoplasm</location>
    </subcellularLocation>
</comment>
<comment type="miscellaneous">
    <text evidence="7">Present with 2460 molecules/cell in log phase SD medium.</text>
</comment>
<protein>
    <recommendedName>
        <fullName>GTPase-activating protein GYP7</fullName>
    </recommendedName>
    <alternativeName>
        <fullName>GAP for YPT7</fullName>
    </alternativeName>
</protein>
<gene>
    <name type="primary">GYP7</name>
    <name type="ordered locus">YDL234C</name>
</gene>
<evidence type="ECO:0000255" key="1">
    <source>
        <dbReference type="PROSITE-ProRule" id="PRU00163"/>
    </source>
</evidence>
<evidence type="ECO:0000256" key="2">
    <source>
        <dbReference type="SAM" id="MobiDB-lite"/>
    </source>
</evidence>
<evidence type="ECO:0000269" key="3">
    <source>
    </source>
</evidence>
<evidence type="ECO:0000269" key="4">
    <source>
    </source>
</evidence>
<evidence type="ECO:0000269" key="5">
    <source>
    </source>
</evidence>
<evidence type="ECO:0000269" key="6">
    <source>
    </source>
</evidence>
<evidence type="ECO:0000269" key="7">
    <source>
    </source>
</evidence>
<evidence type="ECO:0000305" key="8">
    <source>
    </source>
</evidence>
<evidence type="ECO:0007744" key="9">
    <source>
    </source>
</evidence>
<dbReference type="EMBL" id="X79552">
    <property type="protein sequence ID" value="CAA56095.1"/>
    <property type="molecule type" value="Genomic_DNA"/>
</dbReference>
<dbReference type="EMBL" id="Z74281">
    <property type="protein sequence ID" value="CAA98813.1"/>
    <property type="molecule type" value="Genomic_DNA"/>
</dbReference>
<dbReference type="EMBL" id="Z74282">
    <property type="protein sequence ID" value="CAA98814.1"/>
    <property type="molecule type" value="Genomic_DNA"/>
</dbReference>
<dbReference type="EMBL" id="BK006938">
    <property type="protein sequence ID" value="DAA11632.1"/>
    <property type="molecule type" value="Genomic_DNA"/>
</dbReference>
<dbReference type="PIR" id="S61057">
    <property type="entry name" value="S61057"/>
</dbReference>
<dbReference type="RefSeq" id="NP_010047.1">
    <property type="nucleotide sequence ID" value="NM_001180294.1"/>
</dbReference>
<dbReference type="SMR" id="P48365"/>
<dbReference type="BioGRID" id="31877">
    <property type="interactions" value="73"/>
</dbReference>
<dbReference type="DIP" id="DIP-6769N"/>
<dbReference type="FunCoup" id="P48365">
    <property type="interactions" value="101"/>
</dbReference>
<dbReference type="IntAct" id="P48365">
    <property type="interactions" value="9"/>
</dbReference>
<dbReference type="MINT" id="P48365"/>
<dbReference type="STRING" id="4932.YDL234C"/>
<dbReference type="iPTMnet" id="P48365"/>
<dbReference type="PaxDb" id="4932-YDL234C"/>
<dbReference type="PeptideAtlas" id="P48365"/>
<dbReference type="EnsemblFungi" id="YDL234C_mRNA">
    <property type="protein sequence ID" value="YDL234C"/>
    <property type="gene ID" value="YDL234C"/>
</dbReference>
<dbReference type="GeneID" id="851364"/>
<dbReference type="KEGG" id="sce:YDL234C"/>
<dbReference type="AGR" id="SGD:S000002393"/>
<dbReference type="SGD" id="S000002393">
    <property type="gene designation" value="GYP7"/>
</dbReference>
<dbReference type="VEuPathDB" id="FungiDB:YDL234C"/>
<dbReference type="eggNOG" id="KOG2197">
    <property type="taxonomic scope" value="Eukaryota"/>
</dbReference>
<dbReference type="GeneTree" id="ENSGT00940000169893"/>
<dbReference type="HOGENOM" id="CLU_004457_0_1_1"/>
<dbReference type="InParanoid" id="P48365"/>
<dbReference type="OMA" id="WWREQRG"/>
<dbReference type="OrthoDB" id="10264062at2759"/>
<dbReference type="BioCyc" id="YEAST:G3O-29612-MONOMER"/>
<dbReference type="Reactome" id="R-SCE-8854214">
    <property type="pathway name" value="TBC/RABGAPs"/>
</dbReference>
<dbReference type="BioGRID-ORCS" id="851364">
    <property type="hits" value="1 hit in 10 CRISPR screens"/>
</dbReference>
<dbReference type="PRO" id="PR:P48365"/>
<dbReference type="Proteomes" id="UP000002311">
    <property type="component" value="Chromosome IV"/>
</dbReference>
<dbReference type="RNAct" id="P48365">
    <property type="molecule type" value="protein"/>
</dbReference>
<dbReference type="GO" id="GO:0005737">
    <property type="term" value="C:cytoplasm"/>
    <property type="evidence" value="ECO:0000314"/>
    <property type="project" value="SGD"/>
</dbReference>
<dbReference type="GO" id="GO:0005829">
    <property type="term" value="C:cytosol"/>
    <property type="evidence" value="ECO:0007005"/>
    <property type="project" value="SGD"/>
</dbReference>
<dbReference type="GO" id="GO:0005770">
    <property type="term" value="C:late endosome"/>
    <property type="evidence" value="ECO:0000314"/>
    <property type="project" value="SGD"/>
</dbReference>
<dbReference type="GO" id="GO:0005096">
    <property type="term" value="F:GTPase activator activity"/>
    <property type="evidence" value="ECO:0000314"/>
    <property type="project" value="SGD"/>
</dbReference>
<dbReference type="GO" id="GO:0032889">
    <property type="term" value="P:regulation of vacuole fusion, non-autophagic"/>
    <property type="evidence" value="ECO:0000315"/>
    <property type="project" value="SGD"/>
</dbReference>
<dbReference type="GO" id="GO:0016192">
    <property type="term" value="P:vesicle-mediated transport"/>
    <property type="evidence" value="ECO:0000314"/>
    <property type="project" value="SGD"/>
</dbReference>
<dbReference type="FunFam" id="1.10.8.270:FF:000061">
    <property type="entry name" value="GTPase-activating protein"/>
    <property type="match status" value="1"/>
</dbReference>
<dbReference type="FunFam" id="1.10.472.80:FF:000005">
    <property type="entry name" value="TBC1 domain family member 15"/>
    <property type="match status" value="1"/>
</dbReference>
<dbReference type="Gene3D" id="1.10.8.270">
    <property type="entry name" value="putative rabgap domain of human tbc1 domain family member 14 like domains"/>
    <property type="match status" value="1"/>
</dbReference>
<dbReference type="Gene3D" id="1.10.472.80">
    <property type="entry name" value="Ypt/Rab-GAP domain of gyp1p, domain 3"/>
    <property type="match status" value="1"/>
</dbReference>
<dbReference type="InterPro" id="IPR000195">
    <property type="entry name" value="Rab-GAP-TBC_dom"/>
</dbReference>
<dbReference type="InterPro" id="IPR035969">
    <property type="entry name" value="Rab-GAP_TBC_sf"/>
</dbReference>
<dbReference type="PANTHER" id="PTHR22957:SF502">
    <property type="entry name" value="SMALL G PROTEIN SIGNALING MODULATOR 2-RELATED"/>
    <property type="match status" value="1"/>
</dbReference>
<dbReference type="PANTHER" id="PTHR22957">
    <property type="entry name" value="TBC1 DOMAIN FAMILY MEMBER GTPASE-ACTIVATING PROTEIN"/>
    <property type="match status" value="1"/>
</dbReference>
<dbReference type="Pfam" id="PF00566">
    <property type="entry name" value="RabGAP-TBC"/>
    <property type="match status" value="1"/>
</dbReference>
<dbReference type="SMART" id="SM00164">
    <property type="entry name" value="TBC"/>
    <property type="match status" value="1"/>
</dbReference>
<dbReference type="SUPFAM" id="SSF47923">
    <property type="entry name" value="Ypt/Rab-GAP domain of gyp1p"/>
    <property type="match status" value="2"/>
</dbReference>
<dbReference type="PROSITE" id="PS50086">
    <property type="entry name" value="TBC_RABGAP"/>
    <property type="match status" value="1"/>
</dbReference>
<keyword id="KW-0963">Cytoplasm</keyword>
<keyword id="KW-0343">GTPase activation</keyword>
<keyword id="KW-0597">Phosphoprotein</keyword>
<keyword id="KW-1185">Reference proteome</keyword>
<sequence>MSKILFCKSKVFLHPTSDARDNIAGFLLLTLEANKLSHQAILQYIPESGLSTLEISKLLKHEAKVGTCPTSTPFVIENSINFSNLVNTSLGQAFEISLSQIYCIQFRPPSPNGWYVGSLVIYPLTEQFTGFQPPVLFFHDQLCPSTTDKLKRLRKSMNPFDDSDELYWGGVDLRNKINELMELKKSNLEPEFWLVNPSLNDLRNFVSKDLLESYNNSKKDTTELATAGVKLNEKFQEWKWNVMSKIADVTTKSTNFIDSWLTNNSPIQKSQIDNEYLQKLLNNEKVKQIEQDYDSARVYLANWSLGVKQEAERYQKQNKLFDSYRNNIFNDLNLTDELSDTEINNALQRQFPLTEAKWNSLWDENDGRLRVTVNEVKDFIFHGGLENDSLRGKVWGFLLEIYPWDSSQDERVQIDQTLAAEYDQLKLTWSKDFLQFDDEDEEEYWNDQLFRISKDVRRCDRNLEIFQYNTIDGLPPPPQQLPANENNSTSPESANDESDDADDGVRNPHLIHLQNILITYNVYNTNLGYVQGMTDLLSPIYVIMKEEWKTFWCFTHFMDIMERNFLRDQSGIHEQMLTLVELVQLMLPELSEHLNKCDSGNLFFCFRMLLVWFKREFEMEDIMHIWENFWTFYYSSQFQLFFMLAILQKNSQAILQHLNQFDQILKFFNELNGKLDWNDLMVRAELLFKKFEKMMHVMERDLQNVSSSSSSSSTGVLPCQSERLTLLLSKKPIIRHEGQRSKNSVK</sequence>